<comment type="function">
    <text evidence="2">Mitochondrial GTPase that mediates the disassembly of ribosomes from messenger RNA at the termination of mitochondrial protein biosynthesis. Not involved in the GTP-dependent ribosomal translocation step during translation elongation.</text>
</comment>
<comment type="subcellular location">
    <subcellularLocation>
        <location evidence="2">Mitochondrion</location>
    </subcellularLocation>
</comment>
<comment type="similarity">
    <text evidence="2">Belongs to the TRAFAC class translation factor GTPase superfamily. Classic translation factor GTPase family. EF-G/EF-2 subfamily.</text>
</comment>
<dbReference type="EMBL" id="CH954182">
    <property type="protein sequence ID" value="EDV54118.1"/>
    <property type="molecule type" value="Genomic_DNA"/>
</dbReference>
<dbReference type="RefSeq" id="XP_001982248.2">
    <property type="nucleotide sequence ID" value="XM_001982212.2"/>
</dbReference>
<dbReference type="SMR" id="B3P8M3"/>
<dbReference type="eggNOG" id="KOG0464">
    <property type="taxonomic scope" value="Eukaryota"/>
</dbReference>
<dbReference type="HOGENOM" id="CLU_002794_4_1_1"/>
<dbReference type="OMA" id="GPQFTFP"/>
<dbReference type="OrthoDB" id="198619at2759"/>
<dbReference type="PhylomeDB" id="B3P8M3"/>
<dbReference type="Proteomes" id="UP000008711">
    <property type="component" value="Unassembled WGS sequence"/>
</dbReference>
<dbReference type="GO" id="GO:0005739">
    <property type="term" value="C:mitochondrion"/>
    <property type="evidence" value="ECO:0007669"/>
    <property type="project" value="UniProtKB-SubCell"/>
</dbReference>
<dbReference type="GO" id="GO:0005525">
    <property type="term" value="F:GTP binding"/>
    <property type="evidence" value="ECO:0007669"/>
    <property type="project" value="UniProtKB-UniRule"/>
</dbReference>
<dbReference type="GO" id="GO:0003924">
    <property type="term" value="F:GTPase activity"/>
    <property type="evidence" value="ECO:0000250"/>
    <property type="project" value="UniProtKB"/>
</dbReference>
<dbReference type="GO" id="GO:0032543">
    <property type="term" value="P:mitochondrial translation"/>
    <property type="evidence" value="ECO:0000250"/>
    <property type="project" value="UniProtKB"/>
</dbReference>
<dbReference type="GO" id="GO:0032790">
    <property type="term" value="P:ribosome disassembly"/>
    <property type="evidence" value="ECO:0000250"/>
    <property type="project" value="UniProtKB"/>
</dbReference>
<dbReference type="CDD" id="cd16262">
    <property type="entry name" value="EFG_III"/>
    <property type="match status" value="1"/>
</dbReference>
<dbReference type="CDD" id="cd03713">
    <property type="entry name" value="EFG_mtEFG_C"/>
    <property type="match status" value="1"/>
</dbReference>
<dbReference type="FunFam" id="3.30.70.240:FF:000001">
    <property type="entry name" value="Elongation factor G"/>
    <property type="match status" value="1"/>
</dbReference>
<dbReference type="FunFam" id="2.40.30.10:FF:000203">
    <property type="entry name" value="Ribosome-releasing factor 2, mitochondrial"/>
    <property type="match status" value="1"/>
</dbReference>
<dbReference type="FunFam" id="3.30.230.10:FF:000033">
    <property type="entry name" value="Ribosome-releasing factor 2, mitochondrial"/>
    <property type="match status" value="1"/>
</dbReference>
<dbReference type="FunFam" id="3.30.70.870:FF:000005">
    <property type="entry name" value="Ribosome-releasing factor 2, mitochondrial"/>
    <property type="match status" value="1"/>
</dbReference>
<dbReference type="FunFam" id="3.40.50.300:FF:000514">
    <property type="entry name" value="Ribosome-releasing factor 2, mitochondrial"/>
    <property type="match status" value="1"/>
</dbReference>
<dbReference type="Gene3D" id="3.30.230.10">
    <property type="match status" value="1"/>
</dbReference>
<dbReference type="Gene3D" id="3.30.70.240">
    <property type="match status" value="1"/>
</dbReference>
<dbReference type="Gene3D" id="3.30.70.870">
    <property type="entry name" value="Elongation Factor G (Translational Gtpase), domain 3"/>
    <property type="match status" value="1"/>
</dbReference>
<dbReference type="Gene3D" id="3.40.50.300">
    <property type="entry name" value="P-loop containing nucleotide triphosphate hydrolases"/>
    <property type="match status" value="1"/>
</dbReference>
<dbReference type="Gene3D" id="2.40.30.10">
    <property type="entry name" value="Translation factors"/>
    <property type="match status" value="1"/>
</dbReference>
<dbReference type="HAMAP" id="MF_03059">
    <property type="entry name" value="mEF_G_2"/>
    <property type="match status" value="1"/>
</dbReference>
<dbReference type="InterPro" id="IPR053905">
    <property type="entry name" value="EF-G-like_DII"/>
</dbReference>
<dbReference type="InterPro" id="IPR030851">
    <property type="entry name" value="EFG2"/>
</dbReference>
<dbReference type="InterPro" id="IPR041095">
    <property type="entry name" value="EFG_II"/>
</dbReference>
<dbReference type="InterPro" id="IPR009022">
    <property type="entry name" value="EFG_III"/>
</dbReference>
<dbReference type="InterPro" id="IPR035647">
    <property type="entry name" value="EFG_III/V"/>
</dbReference>
<dbReference type="InterPro" id="IPR035649">
    <property type="entry name" value="EFG_V"/>
</dbReference>
<dbReference type="InterPro" id="IPR000640">
    <property type="entry name" value="EFG_V-like"/>
</dbReference>
<dbReference type="InterPro" id="IPR031157">
    <property type="entry name" value="G_TR_CS"/>
</dbReference>
<dbReference type="InterPro" id="IPR027417">
    <property type="entry name" value="P-loop_NTPase"/>
</dbReference>
<dbReference type="InterPro" id="IPR020568">
    <property type="entry name" value="Ribosomal_Su5_D2-typ_SF"/>
</dbReference>
<dbReference type="InterPro" id="IPR014721">
    <property type="entry name" value="Ribsml_uS5_D2-typ_fold_subgr"/>
</dbReference>
<dbReference type="InterPro" id="IPR005225">
    <property type="entry name" value="Small_GTP-bd"/>
</dbReference>
<dbReference type="InterPro" id="IPR000795">
    <property type="entry name" value="T_Tr_GTP-bd_dom"/>
</dbReference>
<dbReference type="InterPro" id="IPR009000">
    <property type="entry name" value="Transl_B-barrel_sf"/>
</dbReference>
<dbReference type="NCBIfam" id="TIGR00231">
    <property type="entry name" value="small_GTP"/>
    <property type="match status" value="1"/>
</dbReference>
<dbReference type="PANTHER" id="PTHR43261:SF1">
    <property type="entry name" value="RIBOSOME-RELEASING FACTOR 2, MITOCHONDRIAL"/>
    <property type="match status" value="1"/>
</dbReference>
<dbReference type="PANTHER" id="PTHR43261">
    <property type="entry name" value="TRANSLATION ELONGATION FACTOR G-RELATED"/>
    <property type="match status" value="1"/>
</dbReference>
<dbReference type="Pfam" id="PF22042">
    <property type="entry name" value="EF-G_D2"/>
    <property type="match status" value="1"/>
</dbReference>
<dbReference type="Pfam" id="PF00679">
    <property type="entry name" value="EFG_C"/>
    <property type="match status" value="1"/>
</dbReference>
<dbReference type="Pfam" id="PF14492">
    <property type="entry name" value="EFG_III"/>
    <property type="match status" value="1"/>
</dbReference>
<dbReference type="Pfam" id="PF00009">
    <property type="entry name" value="GTP_EFTU"/>
    <property type="match status" value="1"/>
</dbReference>
<dbReference type="PRINTS" id="PR00315">
    <property type="entry name" value="ELONGATNFCT"/>
</dbReference>
<dbReference type="SMART" id="SM00838">
    <property type="entry name" value="EFG_C"/>
    <property type="match status" value="1"/>
</dbReference>
<dbReference type="SUPFAM" id="SSF54980">
    <property type="entry name" value="EF-G C-terminal domain-like"/>
    <property type="match status" value="2"/>
</dbReference>
<dbReference type="SUPFAM" id="SSF52540">
    <property type="entry name" value="P-loop containing nucleoside triphosphate hydrolases"/>
    <property type="match status" value="1"/>
</dbReference>
<dbReference type="SUPFAM" id="SSF54211">
    <property type="entry name" value="Ribosomal protein S5 domain 2-like"/>
    <property type="match status" value="1"/>
</dbReference>
<dbReference type="SUPFAM" id="SSF50447">
    <property type="entry name" value="Translation proteins"/>
    <property type="match status" value="1"/>
</dbReference>
<dbReference type="PROSITE" id="PS00301">
    <property type="entry name" value="G_TR_1"/>
    <property type="match status" value="1"/>
</dbReference>
<dbReference type="PROSITE" id="PS51722">
    <property type="entry name" value="G_TR_2"/>
    <property type="match status" value="1"/>
</dbReference>
<gene>
    <name evidence="1" type="primary">mRRF2</name>
    <name evidence="1" type="synonym">EF-G2</name>
    <name type="ORF">GG11151</name>
</gene>
<accession>B3P8M3</accession>
<name>RRF2M_DROER</name>
<protein>
    <recommendedName>
        <fullName evidence="2">Ribosome-releasing factor 2, mitochondrial</fullName>
        <shortName evidence="2">RRF2mt</shortName>
    </recommendedName>
    <alternativeName>
        <fullName evidence="2">Elongation factor G 2, mitochondrial</fullName>
        <shortName evidence="2">EF-G2mt</shortName>
        <shortName evidence="2">mEF-G 2</shortName>
    </alternativeName>
</protein>
<feature type="transit peptide" description="Mitochondrion" evidence="2">
    <location>
        <begin position="1"/>
        <end position="29"/>
    </location>
</feature>
<feature type="chain" id="PRO_0000385599" description="Ribosome-releasing factor 2, mitochondrial">
    <location>
        <begin position="30"/>
        <end position="718"/>
    </location>
</feature>
<feature type="domain" description="tr-type G">
    <location>
        <begin position="31"/>
        <end position="310"/>
    </location>
</feature>
<feature type="binding site" evidence="2">
    <location>
        <begin position="40"/>
        <end position="47"/>
    </location>
    <ligand>
        <name>GTP</name>
        <dbReference type="ChEBI" id="CHEBI:37565"/>
    </ligand>
</feature>
<feature type="binding site" evidence="2">
    <location>
        <begin position="104"/>
        <end position="108"/>
    </location>
    <ligand>
        <name>GTP</name>
        <dbReference type="ChEBI" id="CHEBI:37565"/>
    </ligand>
</feature>
<feature type="binding site" evidence="2">
    <location>
        <begin position="158"/>
        <end position="161"/>
    </location>
    <ligand>
        <name>GTP</name>
        <dbReference type="ChEBI" id="CHEBI:37565"/>
    </ligand>
</feature>
<organism>
    <name type="scientific">Drosophila erecta</name>
    <name type="common">Fruit fly</name>
    <dbReference type="NCBI Taxonomy" id="7220"/>
    <lineage>
        <taxon>Eukaryota</taxon>
        <taxon>Metazoa</taxon>
        <taxon>Ecdysozoa</taxon>
        <taxon>Arthropoda</taxon>
        <taxon>Hexapoda</taxon>
        <taxon>Insecta</taxon>
        <taxon>Pterygota</taxon>
        <taxon>Neoptera</taxon>
        <taxon>Endopterygota</taxon>
        <taxon>Diptera</taxon>
        <taxon>Brachycera</taxon>
        <taxon>Muscomorpha</taxon>
        <taxon>Ephydroidea</taxon>
        <taxon>Drosophilidae</taxon>
        <taxon>Drosophila</taxon>
        <taxon>Sophophora</taxon>
    </lineage>
</organism>
<reference key="1">
    <citation type="journal article" date="2007" name="Nature">
        <title>Evolution of genes and genomes on the Drosophila phylogeny.</title>
        <authorList>
            <consortium name="Drosophila 12 genomes consortium"/>
        </authorList>
    </citation>
    <scope>NUCLEOTIDE SEQUENCE [LARGE SCALE GENOMIC DNA]</scope>
    <source>
        <strain>Tucson 14021-0224.01</strain>
    </source>
</reference>
<proteinExistence type="inferred from homology"/>
<sequence>MLKCAWQNGPRQSNRWLWQLSNQIWKRSYSSKIRNIGILAHIDAGKTTTTERMLFYAGKTRALGEVHRGNTVTDYLTQERERGITICSSAVTFPWNDHRINLLDTPGHIDFTMEVEQSLYAVDGVVVVLDGTAGVEAQTVTVWSQADKHKLPRLIFVNKMDRPDADFVKCVSDLKDKLETQPVCLQYPVKNEDGQLAINDVIHLERLSWQQKDLGRSYKNVKLEPSDDLRQLQEKRNELIDQLSGLDDELADVVISTESFDKVDNALIERALRRATTQQKVVPVLLGSAYKNVGIQRLMDAVNSYLPAPEERNQIYDCFGTEVAGKVFKIVHDKQRGPLTLVRILRGEIKRGMRLISARGQAEVVSKLYEPLADEYREVSAVQSGDVVICAGLKSTVTGDLLTSSEEDDEFDESHELFAIDPQIPDAVYFCSIEPPSVSSQTAMEQALKQLQREDPSLRVSYDSVTGQTVLGGMGELHMDIIKSRILSEYKIDVDLGPLQIAYKEAIESPALTTLSVEKEIAGSKQSVSITLEVVKNQAELFSLDKSPENLPNLNTLRPRILQVLRKGSISALERGPRVGGQVVETQIRLHNATIGRGTADSFVMATASQCVQKLLSTSGTRLLEPIMALQIVAPSERISGIMADLSRRRALINDVLPKGERNKMILVNAPLAELSGYSSALRTISSGTASMTMQPCGFSSMNSVDESLAERRAQGLE</sequence>
<evidence type="ECO:0000250" key="1">
    <source>
        <dbReference type="UniProtKB" id="Q9VCX4"/>
    </source>
</evidence>
<evidence type="ECO:0000255" key="2">
    <source>
        <dbReference type="HAMAP-Rule" id="MF_03059"/>
    </source>
</evidence>
<keyword id="KW-0342">GTP-binding</keyword>
<keyword id="KW-0496">Mitochondrion</keyword>
<keyword id="KW-0547">Nucleotide-binding</keyword>
<keyword id="KW-0648">Protein biosynthesis</keyword>
<keyword id="KW-0809">Transit peptide</keyword>